<evidence type="ECO:0000255" key="1">
    <source>
        <dbReference type="HAMAP-Rule" id="MF_02000"/>
    </source>
</evidence>
<evidence type="ECO:0000255" key="2">
    <source>
        <dbReference type="PROSITE-ProRule" id="PRU00285"/>
    </source>
</evidence>
<comment type="function">
    <text evidence="1">Associates with aggregated proteins, together with IbpB, to stabilize and protect them from irreversible denaturation and extensive proteolysis during heat shock and oxidative stress. Aggregated proteins bound to the IbpAB complex are more efficiently refolded and reactivated by the ATP-dependent chaperone systems ClpB and DnaK/DnaJ/GrpE. Its activity is ATP-independent.</text>
</comment>
<comment type="subunit">
    <text evidence="1">Monomer. Forms homomultimers of about 100-150 subunits at optimal growth temperatures. Conformation changes to monomers at high temperatures or high ionic concentrations.</text>
</comment>
<comment type="subcellular location">
    <subcellularLocation>
        <location evidence="1">Cytoplasm</location>
    </subcellularLocation>
</comment>
<comment type="similarity">
    <text evidence="1 2">Belongs to the small heat shock protein (HSP20) family.</text>
</comment>
<feature type="chain" id="PRO_1000189079" description="Small heat shock protein IbpA">
    <location>
        <begin position="1"/>
        <end position="137"/>
    </location>
</feature>
<feature type="domain" description="sHSP" evidence="2">
    <location>
        <begin position="28"/>
        <end position="137"/>
    </location>
</feature>
<name>IBPA_ECO5E</name>
<sequence length="137" mass="15774">MRNFDLSPLYRSAIGFDRLFNHLENNQSQSNGGYPPYNVELVDENHYRIAIAVAGFAESELEITAQDNLLVVKGAHADEQKERTYLYQGIAERNFERKFQLAENIHVRGANLVNGLLYIDLERVIPEAKKPRRIEIN</sequence>
<accession>B5YX93</accession>
<keyword id="KW-0143">Chaperone</keyword>
<keyword id="KW-0963">Cytoplasm</keyword>
<keyword id="KW-0346">Stress response</keyword>
<proteinExistence type="inferred from homology"/>
<protein>
    <recommendedName>
        <fullName evidence="1">Small heat shock protein IbpA</fullName>
    </recommendedName>
    <alternativeName>
        <fullName evidence="1">16 kDa heat shock protein A</fullName>
    </alternativeName>
</protein>
<dbReference type="EMBL" id="CP001164">
    <property type="protein sequence ID" value="ACI38128.1"/>
    <property type="molecule type" value="Genomic_DNA"/>
</dbReference>
<dbReference type="RefSeq" id="WP_001243437.1">
    <property type="nucleotide sequence ID" value="NC_011353.1"/>
</dbReference>
<dbReference type="SMR" id="B5YX93"/>
<dbReference type="GeneID" id="93778428"/>
<dbReference type="KEGG" id="ecf:ECH74115_5119"/>
<dbReference type="HOGENOM" id="CLU_046737_4_2_6"/>
<dbReference type="GO" id="GO:0005737">
    <property type="term" value="C:cytoplasm"/>
    <property type="evidence" value="ECO:0007669"/>
    <property type="project" value="UniProtKB-SubCell"/>
</dbReference>
<dbReference type="GO" id="GO:0050821">
    <property type="term" value="P:protein stabilization"/>
    <property type="evidence" value="ECO:0007669"/>
    <property type="project" value="UniProtKB-UniRule"/>
</dbReference>
<dbReference type="CDD" id="cd06470">
    <property type="entry name" value="ACD_IbpA-B_like"/>
    <property type="match status" value="1"/>
</dbReference>
<dbReference type="FunFam" id="2.60.40.790:FF:000002">
    <property type="entry name" value="Small heat shock protein IbpA"/>
    <property type="match status" value="1"/>
</dbReference>
<dbReference type="Gene3D" id="2.60.40.790">
    <property type="match status" value="1"/>
</dbReference>
<dbReference type="HAMAP" id="MF_02000">
    <property type="entry name" value="HSP20_IbpA"/>
    <property type="match status" value="1"/>
</dbReference>
<dbReference type="InterPro" id="IPR002068">
    <property type="entry name" value="A-crystallin/Hsp20_dom"/>
</dbReference>
<dbReference type="InterPro" id="IPR037913">
    <property type="entry name" value="ACD_IbpA/B"/>
</dbReference>
<dbReference type="InterPro" id="IPR008978">
    <property type="entry name" value="HSP20-like_chaperone"/>
</dbReference>
<dbReference type="InterPro" id="IPR023728">
    <property type="entry name" value="HSP20_IbpA"/>
</dbReference>
<dbReference type="NCBIfam" id="NF008013">
    <property type="entry name" value="PRK10743.1"/>
    <property type="match status" value="1"/>
</dbReference>
<dbReference type="PANTHER" id="PTHR47062">
    <property type="match status" value="1"/>
</dbReference>
<dbReference type="PANTHER" id="PTHR47062:SF1">
    <property type="entry name" value="SMALL HEAT SHOCK PROTEIN IBPA"/>
    <property type="match status" value="1"/>
</dbReference>
<dbReference type="Pfam" id="PF00011">
    <property type="entry name" value="HSP20"/>
    <property type="match status" value="1"/>
</dbReference>
<dbReference type="SUPFAM" id="SSF49764">
    <property type="entry name" value="HSP20-like chaperones"/>
    <property type="match status" value="1"/>
</dbReference>
<dbReference type="PROSITE" id="PS01031">
    <property type="entry name" value="SHSP"/>
    <property type="match status" value="1"/>
</dbReference>
<organism>
    <name type="scientific">Escherichia coli O157:H7 (strain EC4115 / EHEC)</name>
    <dbReference type="NCBI Taxonomy" id="444450"/>
    <lineage>
        <taxon>Bacteria</taxon>
        <taxon>Pseudomonadati</taxon>
        <taxon>Pseudomonadota</taxon>
        <taxon>Gammaproteobacteria</taxon>
        <taxon>Enterobacterales</taxon>
        <taxon>Enterobacteriaceae</taxon>
        <taxon>Escherichia</taxon>
    </lineage>
</organism>
<gene>
    <name evidence="1" type="primary">ibpA</name>
    <name type="ordered locus">ECH74115_5119</name>
</gene>
<reference key="1">
    <citation type="journal article" date="2011" name="Proc. Natl. Acad. Sci. U.S.A.">
        <title>Genomic anatomy of Escherichia coli O157:H7 outbreaks.</title>
        <authorList>
            <person name="Eppinger M."/>
            <person name="Mammel M.K."/>
            <person name="Leclerc J.E."/>
            <person name="Ravel J."/>
            <person name="Cebula T.A."/>
        </authorList>
    </citation>
    <scope>NUCLEOTIDE SEQUENCE [LARGE SCALE GENOMIC DNA]</scope>
    <source>
        <strain>EC4115 / EHEC</strain>
    </source>
</reference>